<proteinExistence type="inferred from homology"/>
<organism>
    <name type="scientific">Pseudomonas syringae pv. tomato (strain ATCC BAA-871 / DC3000)</name>
    <dbReference type="NCBI Taxonomy" id="223283"/>
    <lineage>
        <taxon>Bacteria</taxon>
        <taxon>Pseudomonadati</taxon>
        <taxon>Pseudomonadota</taxon>
        <taxon>Gammaproteobacteria</taxon>
        <taxon>Pseudomonadales</taxon>
        <taxon>Pseudomonadaceae</taxon>
        <taxon>Pseudomonas</taxon>
    </lineage>
</organism>
<dbReference type="EC" id="1.3.3.3" evidence="1"/>
<dbReference type="EMBL" id="AE016853">
    <property type="protein sequence ID" value="AAO53724.1"/>
    <property type="molecule type" value="Genomic_DNA"/>
</dbReference>
<dbReference type="RefSeq" id="NP_790029.1">
    <property type="nucleotide sequence ID" value="NC_004578.1"/>
</dbReference>
<dbReference type="RefSeq" id="WP_005768167.1">
    <property type="nucleotide sequence ID" value="NC_004578.1"/>
</dbReference>
<dbReference type="SMR" id="Q88B49"/>
<dbReference type="STRING" id="223283.PSPTO_0170"/>
<dbReference type="GeneID" id="61792146"/>
<dbReference type="KEGG" id="pst:PSPTO_0170"/>
<dbReference type="PATRIC" id="fig|223283.9.peg.175"/>
<dbReference type="eggNOG" id="COG0408">
    <property type="taxonomic scope" value="Bacteria"/>
</dbReference>
<dbReference type="HOGENOM" id="CLU_026169_0_1_6"/>
<dbReference type="OrthoDB" id="9777553at2"/>
<dbReference type="PhylomeDB" id="Q88B49"/>
<dbReference type="UniPathway" id="UPA00251">
    <property type="reaction ID" value="UER00322"/>
</dbReference>
<dbReference type="Proteomes" id="UP000002515">
    <property type="component" value="Chromosome"/>
</dbReference>
<dbReference type="GO" id="GO:0005737">
    <property type="term" value="C:cytoplasm"/>
    <property type="evidence" value="ECO:0007669"/>
    <property type="project" value="UniProtKB-SubCell"/>
</dbReference>
<dbReference type="GO" id="GO:0004109">
    <property type="term" value="F:coproporphyrinogen oxidase activity"/>
    <property type="evidence" value="ECO:0007669"/>
    <property type="project" value="UniProtKB-UniRule"/>
</dbReference>
<dbReference type="GO" id="GO:0046872">
    <property type="term" value="F:metal ion binding"/>
    <property type="evidence" value="ECO:0007669"/>
    <property type="project" value="UniProtKB-KW"/>
</dbReference>
<dbReference type="GO" id="GO:0042803">
    <property type="term" value="F:protein homodimerization activity"/>
    <property type="evidence" value="ECO:0000250"/>
    <property type="project" value="UniProtKB"/>
</dbReference>
<dbReference type="GO" id="GO:0006782">
    <property type="term" value="P:protoporphyrinogen IX biosynthetic process"/>
    <property type="evidence" value="ECO:0007669"/>
    <property type="project" value="UniProtKB-UniRule"/>
</dbReference>
<dbReference type="FunFam" id="3.40.1500.10:FF:000001">
    <property type="entry name" value="Oxygen-dependent coproporphyrinogen-III oxidase"/>
    <property type="match status" value="1"/>
</dbReference>
<dbReference type="Gene3D" id="3.40.1500.10">
    <property type="entry name" value="Coproporphyrinogen III oxidase, aerobic"/>
    <property type="match status" value="1"/>
</dbReference>
<dbReference type="HAMAP" id="MF_00333">
    <property type="entry name" value="Coprogen_oxidas"/>
    <property type="match status" value="1"/>
</dbReference>
<dbReference type="InterPro" id="IPR001260">
    <property type="entry name" value="Coprogen_oxidase_aer"/>
</dbReference>
<dbReference type="InterPro" id="IPR036406">
    <property type="entry name" value="Coprogen_oxidase_aer_sf"/>
</dbReference>
<dbReference type="InterPro" id="IPR018375">
    <property type="entry name" value="Coprogen_oxidase_CS"/>
</dbReference>
<dbReference type="NCBIfam" id="NF003727">
    <property type="entry name" value="PRK05330.1"/>
    <property type="match status" value="1"/>
</dbReference>
<dbReference type="PANTHER" id="PTHR10755">
    <property type="entry name" value="COPROPORPHYRINOGEN III OXIDASE, MITOCHONDRIAL"/>
    <property type="match status" value="1"/>
</dbReference>
<dbReference type="PANTHER" id="PTHR10755:SF0">
    <property type="entry name" value="OXYGEN-DEPENDENT COPROPORPHYRINOGEN-III OXIDASE, MITOCHONDRIAL"/>
    <property type="match status" value="1"/>
</dbReference>
<dbReference type="Pfam" id="PF01218">
    <property type="entry name" value="Coprogen_oxidas"/>
    <property type="match status" value="1"/>
</dbReference>
<dbReference type="PIRSF" id="PIRSF000166">
    <property type="entry name" value="Coproporphyri_ox"/>
    <property type="match status" value="1"/>
</dbReference>
<dbReference type="PRINTS" id="PR00073">
    <property type="entry name" value="COPRGNOXDASE"/>
</dbReference>
<dbReference type="SUPFAM" id="SSF102886">
    <property type="entry name" value="Coproporphyrinogen III oxidase"/>
    <property type="match status" value="1"/>
</dbReference>
<dbReference type="PROSITE" id="PS01021">
    <property type="entry name" value="COPROGEN_OXIDASE"/>
    <property type="match status" value="1"/>
</dbReference>
<keyword id="KW-0963">Cytoplasm</keyword>
<keyword id="KW-0350">Heme biosynthesis</keyword>
<keyword id="KW-0479">Metal-binding</keyword>
<keyword id="KW-0560">Oxidoreductase</keyword>
<keyword id="KW-0627">Porphyrin biosynthesis</keyword>
<keyword id="KW-1185">Reference proteome</keyword>
<name>HEM6_PSESM</name>
<accession>Q88B49</accession>
<evidence type="ECO:0000255" key="1">
    <source>
        <dbReference type="HAMAP-Rule" id="MF_00333"/>
    </source>
</evidence>
<sequence>MSTRTEAVKAYLLDLQDRICTALEQEDGNAHFVEDAWTRPAGGGGRTRVVENGAVIEKGGVNFSHVFGSNLPPSASAHRPELAGRGFEALGVSLVIHPHSPHVPTSHANVRFFIAEKEGEEPVWWFGGGFDLTPYYGVEEDCVHWHRVAERACAPFGDDVYPRYKAWCDSYFHLKHRDEPRGIGGLFFDDVNQWDFDTSFAFIRAIGDAFINAYLPIVRRRKAAAYTVQQREFQEFRRGRYVEFNLVYDRGTLFGLQSGGRTESILMSLPPQVRWGYDWKAAPGSEEARLTDYFLTDRDWLADN</sequence>
<protein>
    <recommendedName>
        <fullName evidence="1">Oxygen-dependent coproporphyrinogen-III oxidase</fullName>
        <shortName evidence="1">CPO</shortName>
        <shortName evidence="1">Coprogen oxidase</shortName>
        <shortName evidence="1">Coproporphyrinogenase</shortName>
        <ecNumber evidence="1">1.3.3.3</ecNumber>
    </recommendedName>
</protein>
<feature type="chain" id="PRO_0000109912" description="Oxygen-dependent coproporphyrinogen-III oxidase">
    <location>
        <begin position="1"/>
        <end position="304"/>
    </location>
</feature>
<feature type="region of interest" description="Important for dimerization" evidence="1">
    <location>
        <begin position="241"/>
        <end position="276"/>
    </location>
</feature>
<feature type="active site" description="Proton donor" evidence="1">
    <location>
        <position position="107"/>
    </location>
</feature>
<feature type="binding site" evidence="1">
    <location>
        <position position="93"/>
    </location>
    <ligand>
        <name>substrate</name>
    </ligand>
</feature>
<feature type="binding site" evidence="1">
    <location>
        <position position="97"/>
    </location>
    <ligand>
        <name>a divalent metal cation</name>
        <dbReference type="ChEBI" id="CHEBI:60240"/>
    </ligand>
</feature>
<feature type="binding site" evidence="1">
    <location>
        <position position="107"/>
    </location>
    <ligand>
        <name>a divalent metal cation</name>
        <dbReference type="ChEBI" id="CHEBI:60240"/>
    </ligand>
</feature>
<feature type="binding site" evidence="1">
    <location>
        <begin position="109"/>
        <end position="111"/>
    </location>
    <ligand>
        <name>substrate</name>
    </ligand>
</feature>
<feature type="binding site" evidence="1">
    <location>
        <position position="146"/>
    </location>
    <ligand>
        <name>a divalent metal cation</name>
        <dbReference type="ChEBI" id="CHEBI:60240"/>
    </ligand>
</feature>
<feature type="binding site" evidence="1">
    <location>
        <position position="176"/>
    </location>
    <ligand>
        <name>a divalent metal cation</name>
        <dbReference type="ChEBI" id="CHEBI:60240"/>
    </ligand>
</feature>
<feature type="binding site" evidence="1">
    <location>
        <begin position="259"/>
        <end position="261"/>
    </location>
    <ligand>
        <name>substrate</name>
    </ligand>
</feature>
<feature type="site" description="Important for dimerization" evidence="1">
    <location>
        <position position="176"/>
    </location>
</feature>
<gene>
    <name evidence="1" type="primary">hemF</name>
    <name type="ordered locus">PSPTO_0170</name>
</gene>
<comment type="function">
    <text evidence="1">Involved in the heme biosynthesis. Catalyzes the aerobic oxidative decarboxylation of propionate groups of rings A and B of coproporphyrinogen-III to yield the vinyl groups in protoporphyrinogen-IX.</text>
</comment>
<comment type="catalytic activity">
    <reaction evidence="1">
        <text>coproporphyrinogen III + O2 + 2 H(+) = protoporphyrinogen IX + 2 CO2 + 2 H2O</text>
        <dbReference type="Rhea" id="RHEA:18257"/>
        <dbReference type="ChEBI" id="CHEBI:15377"/>
        <dbReference type="ChEBI" id="CHEBI:15378"/>
        <dbReference type="ChEBI" id="CHEBI:15379"/>
        <dbReference type="ChEBI" id="CHEBI:16526"/>
        <dbReference type="ChEBI" id="CHEBI:57307"/>
        <dbReference type="ChEBI" id="CHEBI:57309"/>
        <dbReference type="EC" id="1.3.3.3"/>
    </reaction>
</comment>
<comment type="cofactor">
    <cofactor evidence="1">
        <name>a divalent metal cation</name>
        <dbReference type="ChEBI" id="CHEBI:60240"/>
    </cofactor>
</comment>
<comment type="pathway">
    <text evidence="1">Porphyrin-containing compound metabolism; protoporphyrin-IX biosynthesis; protoporphyrinogen-IX from coproporphyrinogen-III (O2 route): step 1/1.</text>
</comment>
<comment type="subunit">
    <text evidence="1">Homodimer.</text>
</comment>
<comment type="subcellular location">
    <subcellularLocation>
        <location evidence="1">Cytoplasm</location>
    </subcellularLocation>
</comment>
<comment type="similarity">
    <text evidence="1">Belongs to the aerobic coproporphyrinogen-III oxidase family.</text>
</comment>
<reference key="1">
    <citation type="journal article" date="2003" name="Proc. Natl. Acad. Sci. U.S.A.">
        <title>The complete genome sequence of the Arabidopsis and tomato pathogen Pseudomonas syringae pv. tomato DC3000.</title>
        <authorList>
            <person name="Buell C.R."/>
            <person name="Joardar V."/>
            <person name="Lindeberg M."/>
            <person name="Selengut J."/>
            <person name="Paulsen I.T."/>
            <person name="Gwinn M.L."/>
            <person name="Dodson R.J."/>
            <person name="DeBoy R.T."/>
            <person name="Durkin A.S."/>
            <person name="Kolonay J.F."/>
            <person name="Madupu R."/>
            <person name="Daugherty S.C."/>
            <person name="Brinkac L.M."/>
            <person name="Beanan M.J."/>
            <person name="Haft D.H."/>
            <person name="Nelson W.C."/>
            <person name="Davidsen T.M."/>
            <person name="Zafar N."/>
            <person name="Zhou L."/>
            <person name="Liu J."/>
            <person name="Yuan Q."/>
            <person name="Khouri H.M."/>
            <person name="Fedorova N.B."/>
            <person name="Tran B."/>
            <person name="Russell D."/>
            <person name="Berry K.J."/>
            <person name="Utterback T.R."/>
            <person name="Van Aken S.E."/>
            <person name="Feldblyum T.V."/>
            <person name="D'Ascenzo M."/>
            <person name="Deng W.-L."/>
            <person name="Ramos A.R."/>
            <person name="Alfano J.R."/>
            <person name="Cartinhour S."/>
            <person name="Chatterjee A.K."/>
            <person name="Delaney T.P."/>
            <person name="Lazarowitz S.G."/>
            <person name="Martin G.B."/>
            <person name="Schneider D.J."/>
            <person name="Tang X."/>
            <person name="Bender C.L."/>
            <person name="White O."/>
            <person name="Fraser C.M."/>
            <person name="Collmer A."/>
        </authorList>
    </citation>
    <scope>NUCLEOTIDE SEQUENCE [LARGE SCALE GENOMIC DNA]</scope>
    <source>
        <strain>ATCC BAA-871 / DC3000</strain>
    </source>
</reference>